<comment type="function">
    <text evidence="1">Catalyzes the condensation of the acetyl group of acetyl-CoA with 3-methyl-2-oxobutanoate (2-ketoisovalerate) to form 3-carboxy-3-hydroxy-4-methylpentanoate (2-isopropylmalate).</text>
</comment>
<comment type="catalytic activity">
    <reaction evidence="1">
        <text>3-methyl-2-oxobutanoate + acetyl-CoA + H2O = (2S)-2-isopropylmalate + CoA + H(+)</text>
        <dbReference type="Rhea" id="RHEA:21524"/>
        <dbReference type="ChEBI" id="CHEBI:1178"/>
        <dbReference type="ChEBI" id="CHEBI:11851"/>
        <dbReference type="ChEBI" id="CHEBI:15377"/>
        <dbReference type="ChEBI" id="CHEBI:15378"/>
        <dbReference type="ChEBI" id="CHEBI:57287"/>
        <dbReference type="ChEBI" id="CHEBI:57288"/>
        <dbReference type="EC" id="2.3.3.13"/>
    </reaction>
</comment>
<comment type="cofactor">
    <cofactor evidence="1">
        <name>Mn(2+)</name>
        <dbReference type="ChEBI" id="CHEBI:29035"/>
    </cofactor>
</comment>
<comment type="pathway">
    <text evidence="1">Amino-acid biosynthesis; L-leucine biosynthesis; L-leucine from 3-methyl-2-oxobutanoate: step 1/4.</text>
</comment>
<comment type="subunit">
    <text evidence="1">Homodimer.</text>
</comment>
<comment type="subcellular location">
    <subcellularLocation>
        <location evidence="1">Cytoplasm</location>
    </subcellularLocation>
</comment>
<comment type="similarity">
    <text evidence="1">Belongs to the alpha-IPM synthase/homocitrate synthase family. LeuA type 1 subfamily.</text>
</comment>
<reference key="1">
    <citation type="journal article" date="2010" name="J. Bacteriol.">
        <title>Genome sequence of Streptococcus gallolyticus: insights into its adaptation to the bovine rumen and its ability to cause endocarditis.</title>
        <authorList>
            <person name="Rusniok C."/>
            <person name="Couve E."/>
            <person name="Da Cunha V."/>
            <person name="El Gana R."/>
            <person name="Zidane N."/>
            <person name="Bouchier C."/>
            <person name="Poyart C."/>
            <person name="Leclercq R."/>
            <person name="Trieu-Cuot P."/>
            <person name="Glaser P."/>
        </authorList>
    </citation>
    <scope>NUCLEOTIDE SEQUENCE [LARGE SCALE GENOMIC DNA]</scope>
    <source>
        <strain>UCN34</strain>
    </source>
</reference>
<organism>
    <name type="scientific">Streptococcus gallolyticus (strain UCN34)</name>
    <dbReference type="NCBI Taxonomy" id="637909"/>
    <lineage>
        <taxon>Bacteria</taxon>
        <taxon>Bacillati</taxon>
        <taxon>Bacillota</taxon>
        <taxon>Bacilli</taxon>
        <taxon>Lactobacillales</taxon>
        <taxon>Streptococcaceae</taxon>
        <taxon>Streptococcus</taxon>
    </lineage>
</organism>
<keyword id="KW-0028">Amino-acid biosynthesis</keyword>
<keyword id="KW-0100">Branched-chain amino acid biosynthesis</keyword>
<keyword id="KW-0963">Cytoplasm</keyword>
<keyword id="KW-0432">Leucine biosynthesis</keyword>
<keyword id="KW-0464">Manganese</keyword>
<keyword id="KW-0479">Metal-binding</keyword>
<keyword id="KW-0808">Transferase</keyword>
<protein>
    <recommendedName>
        <fullName evidence="1">2-isopropylmalate synthase</fullName>
        <ecNumber evidence="1">2.3.3.13</ecNumber>
    </recommendedName>
    <alternativeName>
        <fullName evidence="1">Alpha-IPM synthase</fullName>
    </alternativeName>
    <alternativeName>
        <fullName evidence="1">Alpha-isopropylmalate synthase</fullName>
    </alternativeName>
</protein>
<proteinExistence type="inferred from homology"/>
<feature type="chain" id="PRO_0000406900" description="2-isopropylmalate synthase">
    <location>
        <begin position="1"/>
        <end position="520"/>
    </location>
</feature>
<feature type="domain" description="Pyruvate carboxyltransferase" evidence="1">
    <location>
        <begin position="4"/>
        <end position="266"/>
    </location>
</feature>
<feature type="region of interest" description="Regulatory domain" evidence="1">
    <location>
        <begin position="390"/>
        <end position="520"/>
    </location>
</feature>
<feature type="binding site" evidence="1">
    <location>
        <position position="13"/>
    </location>
    <ligand>
        <name>Mn(2+)</name>
        <dbReference type="ChEBI" id="CHEBI:29035"/>
    </ligand>
</feature>
<feature type="binding site" evidence="1">
    <location>
        <position position="201"/>
    </location>
    <ligand>
        <name>Mn(2+)</name>
        <dbReference type="ChEBI" id="CHEBI:29035"/>
    </ligand>
</feature>
<feature type="binding site" evidence="1">
    <location>
        <position position="203"/>
    </location>
    <ligand>
        <name>Mn(2+)</name>
        <dbReference type="ChEBI" id="CHEBI:29035"/>
    </ligand>
</feature>
<feature type="binding site" evidence="1">
    <location>
        <position position="237"/>
    </location>
    <ligand>
        <name>Mn(2+)</name>
        <dbReference type="ChEBI" id="CHEBI:29035"/>
    </ligand>
</feature>
<dbReference type="EC" id="2.3.3.13" evidence="1"/>
<dbReference type="EMBL" id="FN597254">
    <property type="protein sequence ID" value="CBI13250.1"/>
    <property type="molecule type" value="Genomic_DNA"/>
</dbReference>
<dbReference type="RefSeq" id="WP_012961740.1">
    <property type="nucleotide sequence ID" value="NC_013798.1"/>
</dbReference>
<dbReference type="SMR" id="D3HCJ2"/>
<dbReference type="KEGG" id="sga:GALLO_0758"/>
<dbReference type="HOGENOM" id="CLU_022158_0_1_9"/>
<dbReference type="UniPathway" id="UPA00048">
    <property type="reaction ID" value="UER00070"/>
</dbReference>
<dbReference type="Proteomes" id="UP000001517">
    <property type="component" value="Chromosome"/>
</dbReference>
<dbReference type="GO" id="GO:0005737">
    <property type="term" value="C:cytoplasm"/>
    <property type="evidence" value="ECO:0007669"/>
    <property type="project" value="UniProtKB-SubCell"/>
</dbReference>
<dbReference type="GO" id="GO:0003852">
    <property type="term" value="F:2-isopropylmalate synthase activity"/>
    <property type="evidence" value="ECO:0007669"/>
    <property type="project" value="UniProtKB-UniRule"/>
</dbReference>
<dbReference type="GO" id="GO:0003985">
    <property type="term" value="F:acetyl-CoA C-acetyltransferase activity"/>
    <property type="evidence" value="ECO:0007669"/>
    <property type="project" value="UniProtKB-UniRule"/>
</dbReference>
<dbReference type="GO" id="GO:0030145">
    <property type="term" value="F:manganese ion binding"/>
    <property type="evidence" value="ECO:0007669"/>
    <property type="project" value="UniProtKB-UniRule"/>
</dbReference>
<dbReference type="GO" id="GO:0009098">
    <property type="term" value="P:L-leucine biosynthetic process"/>
    <property type="evidence" value="ECO:0007669"/>
    <property type="project" value="UniProtKB-UniRule"/>
</dbReference>
<dbReference type="CDD" id="cd07940">
    <property type="entry name" value="DRE_TIM_IPMS"/>
    <property type="match status" value="1"/>
</dbReference>
<dbReference type="FunFam" id="1.10.238.260:FF:000001">
    <property type="entry name" value="2-isopropylmalate synthase"/>
    <property type="match status" value="1"/>
</dbReference>
<dbReference type="FunFam" id="3.20.20.70:FF:000010">
    <property type="entry name" value="2-isopropylmalate synthase"/>
    <property type="match status" value="1"/>
</dbReference>
<dbReference type="Gene3D" id="1.10.238.260">
    <property type="match status" value="1"/>
</dbReference>
<dbReference type="Gene3D" id="3.30.160.270">
    <property type="match status" value="1"/>
</dbReference>
<dbReference type="Gene3D" id="3.20.20.70">
    <property type="entry name" value="Aldolase class I"/>
    <property type="match status" value="1"/>
</dbReference>
<dbReference type="HAMAP" id="MF_01025">
    <property type="entry name" value="LeuA_type1"/>
    <property type="match status" value="1"/>
</dbReference>
<dbReference type="InterPro" id="IPR050073">
    <property type="entry name" value="2-IPM_HCS-like"/>
</dbReference>
<dbReference type="InterPro" id="IPR013709">
    <property type="entry name" value="2-isopropylmalate_synth_dimer"/>
</dbReference>
<dbReference type="InterPro" id="IPR002034">
    <property type="entry name" value="AIPM/Hcit_synth_CS"/>
</dbReference>
<dbReference type="InterPro" id="IPR013785">
    <property type="entry name" value="Aldolase_TIM"/>
</dbReference>
<dbReference type="InterPro" id="IPR054691">
    <property type="entry name" value="LeuA/HCS_post-cat"/>
</dbReference>
<dbReference type="InterPro" id="IPR036230">
    <property type="entry name" value="LeuA_allosteric_dom_sf"/>
</dbReference>
<dbReference type="InterPro" id="IPR005671">
    <property type="entry name" value="LeuA_bact_synth"/>
</dbReference>
<dbReference type="InterPro" id="IPR000891">
    <property type="entry name" value="PYR_CT"/>
</dbReference>
<dbReference type="NCBIfam" id="TIGR00973">
    <property type="entry name" value="leuA_bact"/>
    <property type="match status" value="1"/>
</dbReference>
<dbReference type="NCBIfam" id="NF002086">
    <property type="entry name" value="PRK00915.1-3"/>
    <property type="match status" value="1"/>
</dbReference>
<dbReference type="NCBIfam" id="NF002088">
    <property type="entry name" value="PRK00915.1-5"/>
    <property type="match status" value="1"/>
</dbReference>
<dbReference type="PANTHER" id="PTHR10277:SF9">
    <property type="entry name" value="2-ISOPROPYLMALATE SYNTHASE 1, CHLOROPLASTIC-RELATED"/>
    <property type="match status" value="1"/>
</dbReference>
<dbReference type="PANTHER" id="PTHR10277">
    <property type="entry name" value="HOMOCITRATE SYNTHASE-RELATED"/>
    <property type="match status" value="1"/>
</dbReference>
<dbReference type="Pfam" id="PF22617">
    <property type="entry name" value="HCS_D2"/>
    <property type="match status" value="1"/>
</dbReference>
<dbReference type="Pfam" id="PF00682">
    <property type="entry name" value="HMGL-like"/>
    <property type="match status" value="1"/>
</dbReference>
<dbReference type="Pfam" id="PF08502">
    <property type="entry name" value="LeuA_dimer"/>
    <property type="match status" value="1"/>
</dbReference>
<dbReference type="SMART" id="SM00917">
    <property type="entry name" value="LeuA_dimer"/>
    <property type="match status" value="1"/>
</dbReference>
<dbReference type="SUPFAM" id="SSF110921">
    <property type="entry name" value="2-isopropylmalate synthase LeuA, allosteric (dimerisation) domain"/>
    <property type="match status" value="1"/>
</dbReference>
<dbReference type="SUPFAM" id="SSF51569">
    <property type="entry name" value="Aldolase"/>
    <property type="match status" value="1"/>
</dbReference>
<dbReference type="PROSITE" id="PS00815">
    <property type="entry name" value="AIPM_HOMOCIT_SYNTH_1"/>
    <property type="match status" value="1"/>
</dbReference>
<dbReference type="PROSITE" id="PS00816">
    <property type="entry name" value="AIPM_HOMOCIT_SYNTH_2"/>
    <property type="match status" value="1"/>
</dbReference>
<dbReference type="PROSITE" id="PS50991">
    <property type="entry name" value="PYR_CT"/>
    <property type="match status" value="1"/>
</dbReference>
<evidence type="ECO:0000255" key="1">
    <source>
        <dbReference type="HAMAP-Rule" id="MF_01025"/>
    </source>
</evidence>
<sequence length="520" mass="56573">MRKVEFLDTTLRDGEQTPGVNFSIKEKVAIAKQLEKWGIASIEAGFPAASPDSFEAVRQISAAMTTTAVSGLARSVKSDIDACYEALKDAKYPQCHVFIATSPIHREYKLKKTKEEILDIIKEHVTYARSKFDVVEFSPEDATRTELDYLLQVVQTAVDAGATYINIPDTVGFTTPEEYGNIFKYLIENTKSDREIIFSPHCHDDLGMATANTLAAIKNGAGRVEGTVNGIGERAGNVALEEIAVALNIREDYYQATSDIVLNETVNTSELISRFSGISIPKNKAVVGGNAFSHESGIHQDGVLKNPLTYEIITPELVGVKHNSLPLGKLSGRHAFVEKLKELELAFEESEIATLFGKFKKLADKKHEITDADIRALVAGTEIENPEGFHFGDLKLTSNADDTVTAEVLMVNADGEEVEVIANGKGSVEAIYNAVDKFFNQTVRLLSYTMDAVTDGIDSQARVSVSIENVDTGTIFNASGIDFDVLKAGAIAYVNANAFVQKENAGEIGKAVSFRDVPTN</sequence>
<gene>
    <name evidence="1" type="primary">leuA</name>
    <name type="ordered locus">GALLO_0758</name>
</gene>
<accession>D3HCJ2</accession>
<name>LEU1_STRG3</name>